<sequence length="373" mass="41495">MESFAVAAAQLGPHFAPLSNGSVVDKVTPDMAHLISPYWNQFPAMDPIWAKILTAYMIMIGMISWCGNGVVIYIFATTKSLRTPANLLVINLAISDFGIMITNTPMMGINLYFETWVLGPMMCDIYAGLGSAFGCSSIWSMCMISLDRYQVIVKGMAGRPMTIPLALGKIAYIWFMSSIWCLAPAFGWSRYVPEGNLTSCGIDYLERDWNPRSYLIFYSIFVYYIPLFLICYSYWFIIAAVSAHEKAMREQAKKMNVKSLRSSEDAEKSAEGKLAKVALVTITLWFMAWTPYLVINCMGLFKFEGLTPLNTIWGACFAKSAACYNPIVYGISHPKYRLALKEKCPCCVFGKVDDGKSSDAQSQATASEAESKA</sequence>
<keyword id="KW-1003">Cell membrane</keyword>
<keyword id="KW-0966">Cell projection</keyword>
<keyword id="KW-0157">Chromophore</keyword>
<keyword id="KW-1015">Disulfide bond</keyword>
<keyword id="KW-0297">G-protein coupled receptor</keyword>
<keyword id="KW-0325">Glycoprotein</keyword>
<keyword id="KW-0472">Membrane</keyword>
<keyword id="KW-0597">Phosphoprotein</keyword>
<keyword id="KW-0600">Photoreceptor protein</keyword>
<keyword id="KW-0675">Receptor</keyword>
<keyword id="KW-1185">Reference proteome</keyword>
<keyword id="KW-0681">Retinal protein</keyword>
<keyword id="KW-0716">Sensory transduction</keyword>
<keyword id="KW-0807">Transducer</keyword>
<keyword id="KW-0812">Transmembrane</keyword>
<keyword id="KW-1133">Transmembrane helix</keyword>
<keyword id="KW-0844">Vision</keyword>
<dbReference type="EMBL" id="K02315">
    <property type="protein sequence ID" value="AAA28733.1"/>
    <property type="molecule type" value="Genomic_DNA"/>
</dbReference>
<dbReference type="EMBL" id="K02320">
    <property type="protein sequence ID" value="AAA28735.1"/>
    <property type="status" value="ALT_SEQ"/>
    <property type="molecule type" value="Genomic_DNA"/>
</dbReference>
<dbReference type="EMBL" id="K02316">
    <property type="protein sequence ID" value="AAA28735.1"/>
    <property type="status" value="JOINED"/>
    <property type="molecule type" value="Genomic_DNA"/>
</dbReference>
<dbReference type="EMBL" id="K02317">
    <property type="protein sequence ID" value="AAA28735.1"/>
    <property type="status" value="JOINED"/>
    <property type="molecule type" value="Genomic_DNA"/>
</dbReference>
<dbReference type="EMBL" id="K02318">
    <property type="protein sequence ID" value="AAA28735.1"/>
    <property type="status" value="JOINED"/>
    <property type="molecule type" value="Genomic_DNA"/>
</dbReference>
<dbReference type="EMBL" id="K02319">
    <property type="protein sequence ID" value="AAA28735.1"/>
    <property type="status" value="JOINED"/>
    <property type="molecule type" value="Genomic_DNA"/>
</dbReference>
<dbReference type="EMBL" id="AE014297">
    <property type="protein sequence ID" value="AAF55712.1"/>
    <property type="molecule type" value="Genomic_DNA"/>
</dbReference>
<dbReference type="EMBL" id="BT010221">
    <property type="protein sequence ID" value="AAQ23539.1"/>
    <property type="molecule type" value="mRNA"/>
</dbReference>
<dbReference type="EMBL" id="BT023714">
    <property type="protein sequence ID" value="AAY85114.1"/>
    <property type="molecule type" value="mRNA"/>
</dbReference>
<dbReference type="EMBL" id="BT029277">
    <property type="protein sequence ID" value="ABK30914.1"/>
    <property type="molecule type" value="mRNA"/>
</dbReference>
<dbReference type="PIR" id="A90864">
    <property type="entry name" value="OOFF"/>
</dbReference>
<dbReference type="RefSeq" id="NP_524407.1">
    <property type="nucleotide sequence ID" value="NM_079683.3"/>
</dbReference>
<dbReference type="SMR" id="P06002"/>
<dbReference type="BioGRID" id="67356">
    <property type="interactions" value="77"/>
</dbReference>
<dbReference type="DIP" id="DIP-17500N"/>
<dbReference type="FunCoup" id="P06002">
    <property type="interactions" value="36"/>
</dbReference>
<dbReference type="IntAct" id="P06002">
    <property type="interactions" value="5"/>
</dbReference>
<dbReference type="MINT" id="P06002"/>
<dbReference type="STRING" id="7227.FBpp0083266"/>
<dbReference type="GlyCosmos" id="P06002">
    <property type="glycosylation" value="2 sites, No reported glycans"/>
</dbReference>
<dbReference type="GlyGen" id="P06002">
    <property type="glycosylation" value="3 sites, 1 O-linked glycan (1 site)"/>
</dbReference>
<dbReference type="iPTMnet" id="P06002"/>
<dbReference type="PaxDb" id="7227-FBpp0083266"/>
<dbReference type="EnsemblMetazoa" id="FBtr0083857">
    <property type="protein sequence ID" value="FBpp0083266"/>
    <property type="gene ID" value="FBgn0002940"/>
</dbReference>
<dbReference type="GeneID" id="42367"/>
<dbReference type="KEGG" id="dme:Dmel_CG4550"/>
<dbReference type="AGR" id="FB:FBgn0002940"/>
<dbReference type="CTD" id="42367"/>
<dbReference type="FlyBase" id="FBgn0002940">
    <property type="gene designation" value="ninaE"/>
</dbReference>
<dbReference type="VEuPathDB" id="VectorBase:FBgn0002940"/>
<dbReference type="eggNOG" id="KOG3656">
    <property type="taxonomic scope" value="Eukaryota"/>
</dbReference>
<dbReference type="GeneTree" id="ENSGT01120000271853"/>
<dbReference type="HOGENOM" id="CLU_009579_3_0_1"/>
<dbReference type="InParanoid" id="P06002"/>
<dbReference type="OMA" id="WKMAKIV"/>
<dbReference type="OrthoDB" id="9996086at2759"/>
<dbReference type="PhylomeDB" id="P06002"/>
<dbReference type="Reactome" id="R-DME-416476">
    <property type="pathway name" value="G alpha (q) signalling events"/>
</dbReference>
<dbReference type="Reactome" id="R-DME-419771">
    <property type="pathway name" value="Opsins"/>
</dbReference>
<dbReference type="SignaLink" id="P06002"/>
<dbReference type="BioGRID-ORCS" id="42367">
    <property type="hits" value="0 hits in 3 CRISPR screens"/>
</dbReference>
<dbReference type="ChiTaRS" id="ninaE">
    <property type="organism name" value="fly"/>
</dbReference>
<dbReference type="GenomeRNAi" id="42367"/>
<dbReference type="PRO" id="PR:P06002"/>
<dbReference type="Proteomes" id="UP000000803">
    <property type="component" value="Chromosome 3R"/>
</dbReference>
<dbReference type="Bgee" id="FBgn0002940">
    <property type="expression patterns" value="Expressed in outer photoreceptor cell (Drosophila) in insect head and 121 other cell types or tissues"/>
</dbReference>
<dbReference type="GO" id="GO:0031410">
    <property type="term" value="C:cytoplasmic vesicle"/>
    <property type="evidence" value="ECO:0000314"/>
    <property type="project" value="FlyBase"/>
</dbReference>
<dbReference type="GO" id="GO:0005769">
    <property type="term" value="C:early endosome"/>
    <property type="evidence" value="ECO:0000314"/>
    <property type="project" value="FlyBase"/>
</dbReference>
<dbReference type="GO" id="GO:0016027">
    <property type="term" value="C:inaD signaling complex"/>
    <property type="evidence" value="ECO:0000353"/>
    <property type="project" value="FlyBase"/>
</dbReference>
<dbReference type="GO" id="GO:0005886">
    <property type="term" value="C:plasma membrane"/>
    <property type="evidence" value="ECO:0000318"/>
    <property type="project" value="GO_Central"/>
</dbReference>
<dbReference type="GO" id="GO:0016028">
    <property type="term" value="C:rhabdomere"/>
    <property type="evidence" value="ECO:0000314"/>
    <property type="project" value="FlyBase"/>
</dbReference>
<dbReference type="GO" id="GO:0033583">
    <property type="term" value="C:rhabdomere membrane"/>
    <property type="evidence" value="ECO:0007669"/>
    <property type="project" value="UniProtKB-SubCell"/>
</dbReference>
<dbReference type="GO" id="GO:0016029">
    <property type="term" value="C:subrhabdomeral cisterna"/>
    <property type="evidence" value="ECO:0000314"/>
    <property type="project" value="FlyBase"/>
</dbReference>
<dbReference type="GO" id="GO:0008020">
    <property type="term" value="F:G protein-coupled photoreceptor activity"/>
    <property type="evidence" value="ECO:0000315"/>
    <property type="project" value="FlyBase"/>
</dbReference>
<dbReference type="GO" id="GO:0008344">
    <property type="term" value="P:adult locomotory behavior"/>
    <property type="evidence" value="ECO:0000315"/>
    <property type="project" value="FlyBase"/>
</dbReference>
<dbReference type="GO" id="GO:0071482">
    <property type="term" value="P:cellular response to light stimulus"/>
    <property type="evidence" value="ECO:0000315"/>
    <property type="project" value="FlyBase"/>
</dbReference>
<dbReference type="GO" id="GO:0009589">
    <property type="term" value="P:detection of UV"/>
    <property type="evidence" value="ECO:0000315"/>
    <property type="project" value="FlyBase"/>
</dbReference>
<dbReference type="GO" id="GO:0009584">
    <property type="term" value="P:detection of visible light"/>
    <property type="evidence" value="ECO:0000315"/>
    <property type="project" value="FlyBase"/>
</dbReference>
<dbReference type="GO" id="GO:0007186">
    <property type="term" value="P:G protein-coupled receptor signaling pathway"/>
    <property type="evidence" value="ECO:0000318"/>
    <property type="project" value="GO_Central"/>
</dbReference>
<dbReference type="GO" id="GO:0046673">
    <property type="term" value="P:negative regulation of compound eye retinal cell programmed cell death"/>
    <property type="evidence" value="ECO:0000315"/>
    <property type="project" value="FlyBase"/>
</dbReference>
<dbReference type="GO" id="GO:0071632">
    <property type="term" value="P:optomotor response"/>
    <property type="evidence" value="ECO:0000315"/>
    <property type="project" value="FlyBase"/>
</dbReference>
<dbReference type="GO" id="GO:0030265">
    <property type="term" value="P:phospholipase C-activating opsin-mediated signaling pathway"/>
    <property type="evidence" value="ECO:0000315"/>
    <property type="project" value="FlyBase"/>
</dbReference>
<dbReference type="GO" id="GO:0008594">
    <property type="term" value="P:photoreceptor cell morphogenesis"/>
    <property type="evidence" value="ECO:0000315"/>
    <property type="project" value="FlyBase"/>
</dbReference>
<dbReference type="GO" id="GO:0042331">
    <property type="term" value="P:phototaxis"/>
    <property type="evidence" value="ECO:0000315"/>
    <property type="project" value="FlyBase"/>
</dbReference>
<dbReference type="GO" id="GO:0007602">
    <property type="term" value="P:phototransduction"/>
    <property type="evidence" value="ECO:0000315"/>
    <property type="project" value="FlyBase"/>
</dbReference>
<dbReference type="GO" id="GO:0009642">
    <property type="term" value="P:response to light intensity"/>
    <property type="evidence" value="ECO:0000315"/>
    <property type="project" value="FlyBase"/>
</dbReference>
<dbReference type="GO" id="GO:0042052">
    <property type="term" value="P:rhabdomere development"/>
    <property type="evidence" value="ECO:0000315"/>
    <property type="project" value="FlyBase"/>
</dbReference>
<dbReference type="GO" id="GO:0043052">
    <property type="term" value="P:thermotaxis"/>
    <property type="evidence" value="ECO:0000315"/>
    <property type="project" value="FlyBase"/>
</dbReference>
<dbReference type="GO" id="GO:0007601">
    <property type="term" value="P:visual perception"/>
    <property type="evidence" value="ECO:0007669"/>
    <property type="project" value="UniProtKB-KW"/>
</dbReference>
<dbReference type="CDD" id="cd15079">
    <property type="entry name" value="7tmA_photoreceptors_insect"/>
    <property type="match status" value="1"/>
</dbReference>
<dbReference type="FunFam" id="1.20.1070.10:FF:000044">
    <property type="entry name" value="Opsin, ultraviolet-sensitive"/>
    <property type="match status" value="1"/>
</dbReference>
<dbReference type="Gene3D" id="1.20.1070.10">
    <property type="entry name" value="Rhodopsin 7-helix transmembrane proteins"/>
    <property type="match status" value="1"/>
</dbReference>
<dbReference type="InterPro" id="IPR050125">
    <property type="entry name" value="GPCR_opsins"/>
</dbReference>
<dbReference type="InterPro" id="IPR000276">
    <property type="entry name" value="GPCR_Rhodpsn"/>
</dbReference>
<dbReference type="InterPro" id="IPR017452">
    <property type="entry name" value="GPCR_Rhodpsn_7TM"/>
</dbReference>
<dbReference type="InterPro" id="IPR001760">
    <property type="entry name" value="Opsin"/>
</dbReference>
<dbReference type="InterPro" id="IPR001735">
    <property type="entry name" value="Opsin_RH1/RH2"/>
</dbReference>
<dbReference type="InterPro" id="IPR027430">
    <property type="entry name" value="Retinal_BS"/>
</dbReference>
<dbReference type="PANTHER" id="PTHR24240">
    <property type="entry name" value="OPSIN"/>
    <property type="match status" value="1"/>
</dbReference>
<dbReference type="Pfam" id="PF00001">
    <property type="entry name" value="7tm_1"/>
    <property type="match status" value="1"/>
</dbReference>
<dbReference type="PRINTS" id="PR00237">
    <property type="entry name" value="GPCRRHODOPSN"/>
</dbReference>
<dbReference type="PRINTS" id="PR00238">
    <property type="entry name" value="OPSIN"/>
</dbReference>
<dbReference type="PRINTS" id="PR00576">
    <property type="entry name" value="OPSINRH1RH2"/>
</dbReference>
<dbReference type="SUPFAM" id="SSF81321">
    <property type="entry name" value="Family A G protein-coupled receptor-like"/>
    <property type="match status" value="1"/>
</dbReference>
<dbReference type="PROSITE" id="PS00237">
    <property type="entry name" value="G_PROTEIN_RECEP_F1_1"/>
    <property type="match status" value="1"/>
</dbReference>
<dbReference type="PROSITE" id="PS50262">
    <property type="entry name" value="G_PROTEIN_RECEP_F1_2"/>
    <property type="match status" value="1"/>
</dbReference>
<dbReference type="PROSITE" id="PS00238">
    <property type="entry name" value="OPSIN"/>
    <property type="match status" value="1"/>
</dbReference>
<proteinExistence type="evidence at protein level"/>
<reference key="1">
    <citation type="journal article" date="1985" name="Cell">
        <title>The Drosophila ninaE gene encodes an opsin.</title>
        <authorList>
            <person name="O'Tousa J.E."/>
            <person name="Baehr W."/>
            <person name="Martin R.L."/>
            <person name="Hirsh J."/>
            <person name="Pak W.L."/>
            <person name="Applebury M.L."/>
        </authorList>
    </citation>
    <scope>NUCLEOTIDE SEQUENCE [GENOMIC DNA]</scope>
</reference>
<reference key="2">
    <citation type="journal article" date="1985" name="Cell">
        <title>Isolation and structure of a rhodopsin gene from D. melanogaster.</title>
        <authorList>
            <person name="Zuker C.S."/>
            <person name="Cowman A.F."/>
            <person name="Rubin G.M."/>
        </authorList>
    </citation>
    <scope>NUCLEOTIDE SEQUENCE [GENOMIC DNA]</scope>
</reference>
<reference key="3">
    <citation type="journal article" date="2000" name="Science">
        <title>The genome sequence of Drosophila melanogaster.</title>
        <authorList>
            <person name="Adams M.D."/>
            <person name="Celniker S.E."/>
            <person name="Holt R.A."/>
            <person name="Evans C.A."/>
            <person name="Gocayne J.D."/>
            <person name="Amanatides P.G."/>
            <person name="Scherer S.E."/>
            <person name="Li P.W."/>
            <person name="Hoskins R.A."/>
            <person name="Galle R.F."/>
            <person name="George R.A."/>
            <person name="Lewis S.E."/>
            <person name="Richards S."/>
            <person name="Ashburner M."/>
            <person name="Henderson S.N."/>
            <person name="Sutton G.G."/>
            <person name="Wortman J.R."/>
            <person name="Yandell M.D."/>
            <person name="Zhang Q."/>
            <person name="Chen L.X."/>
            <person name="Brandon R.C."/>
            <person name="Rogers Y.-H.C."/>
            <person name="Blazej R.G."/>
            <person name="Champe M."/>
            <person name="Pfeiffer B.D."/>
            <person name="Wan K.H."/>
            <person name="Doyle C."/>
            <person name="Baxter E.G."/>
            <person name="Helt G."/>
            <person name="Nelson C.R."/>
            <person name="Miklos G.L.G."/>
            <person name="Abril J.F."/>
            <person name="Agbayani A."/>
            <person name="An H.-J."/>
            <person name="Andrews-Pfannkoch C."/>
            <person name="Baldwin D."/>
            <person name="Ballew R.M."/>
            <person name="Basu A."/>
            <person name="Baxendale J."/>
            <person name="Bayraktaroglu L."/>
            <person name="Beasley E.M."/>
            <person name="Beeson K.Y."/>
            <person name="Benos P.V."/>
            <person name="Berman B.P."/>
            <person name="Bhandari D."/>
            <person name="Bolshakov S."/>
            <person name="Borkova D."/>
            <person name="Botchan M.R."/>
            <person name="Bouck J."/>
            <person name="Brokstein P."/>
            <person name="Brottier P."/>
            <person name="Burtis K.C."/>
            <person name="Busam D.A."/>
            <person name="Butler H."/>
            <person name="Cadieu E."/>
            <person name="Center A."/>
            <person name="Chandra I."/>
            <person name="Cherry J.M."/>
            <person name="Cawley S."/>
            <person name="Dahlke C."/>
            <person name="Davenport L.B."/>
            <person name="Davies P."/>
            <person name="de Pablos B."/>
            <person name="Delcher A."/>
            <person name="Deng Z."/>
            <person name="Mays A.D."/>
            <person name="Dew I."/>
            <person name="Dietz S.M."/>
            <person name="Dodson K."/>
            <person name="Doup L.E."/>
            <person name="Downes M."/>
            <person name="Dugan-Rocha S."/>
            <person name="Dunkov B.C."/>
            <person name="Dunn P."/>
            <person name="Durbin K.J."/>
            <person name="Evangelista C.C."/>
            <person name="Ferraz C."/>
            <person name="Ferriera S."/>
            <person name="Fleischmann W."/>
            <person name="Fosler C."/>
            <person name="Gabrielian A.E."/>
            <person name="Garg N.S."/>
            <person name="Gelbart W.M."/>
            <person name="Glasser K."/>
            <person name="Glodek A."/>
            <person name="Gong F."/>
            <person name="Gorrell J.H."/>
            <person name="Gu Z."/>
            <person name="Guan P."/>
            <person name="Harris M."/>
            <person name="Harris N.L."/>
            <person name="Harvey D.A."/>
            <person name="Heiman T.J."/>
            <person name="Hernandez J.R."/>
            <person name="Houck J."/>
            <person name="Hostin D."/>
            <person name="Houston K.A."/>
            <person name="Howland T.J."/>
            <person name="Wei M.-H."/>
            <person name="Ibegwam C."/>
            <person name="Jalali M."/>
            <person name="Kalush F."/>
            <person name="Karpen G.H."/>
            <person name="Ke Z."/>
            <person name="Kennison J.A."/>
            <person name="Ketchum K.A."/>
            <person name="Kimmel B.E."/>
            <person name="Kodira C.D."/>
            <person name="Kraft C.L."/>
            <person name="Kravitz S."/>
            <person name="Kulp D."/>
            <person name="Lai Z."/>
            <person name="Lasko P."/>
            <person name="Lei Y."/>
            <person name="Levitsky A.A."/>
            <person name="Li J.H."/>
            <person name="Li Z."/>
            <person name="Liang Y."/>
            <person name="Lin X."/>
            <person name="Liu X."/>
            <person name="Mattei B."/>
            <person name="McIntosh T.C."/>
            <person name="McLeod M.P."/>
            <person name="McPherson D."/>
            <person name="Merkulov G."/>
            <person name="Milshina N.V."/>
            <person name="Mobarry C."/>
            <person name="Morris J."/>
            <person name="Moshrefi A."/>
            <person name="Mount S.M."/>
            <person name="Moy M."/>
            <person name="Murphy B."/>
            <person name="Murphy L."/>
            <person name="Muzny D.M."/>
            <person name="Nelson D.L."/>
            <person name="Nelson D.R."/>
            <person name="Nelson K.A."/>
            <person name="Nixon K."/>
            <person name="Nusskern D.R."/>
            <person name="Pacleb J.M."/>
            <person name="Palazzolo M."/>
            <person name="Pittman G.S."/>
            <person name="Pan S."/>
            <person name="Pollard J."/>
            <person name="Puri V."/>
            <person name="Reese M.G."/>
            <person name="Reinert K."/>
            <person name="Remington K."/>
            <person name="Saunders R.D.C."/>
            <person name="Scheeler F."/>
            <person name="Shen H."/>
            <person name="Shue B.C."/>
            <person name="Siden-Kiamos I."/>
            <person name="Simpson M."/>
            <person name="Skupski M.P."/>
            <person name="Smith T.J."/>
            <person name="Spier E."/>
            <person name="Spradling A.C."/>
            <person name="Stapleton M."/>
            <person name="Strong R."/>
            <person name="Sun E."/>
            <person name="Svirskas R."/>
            <person name="Tector C."/>
            <person name="Turner R."/>
            <person name="Venter E."/>
            <person name="Wang A.H."/>
            <person name="Wang X."/>
            <person name="Wang Z.-Y."/>
            <person name="Wassarman D.A."/>
            <person name="Weinstock G.M."/>
            <person name="Weissenbach J."/>
            <person name="Williams S.M."/>
            <person name="Woodage T."/>
            <person name="Worley K.C."/>
            <person name="Wu D."/>
            <person name="Yang S."/>
            <person name="Yao Q.A."/>
            <person name="Ye J."/>
            <person name="Yeh R.-F."/>
            <person name="Zaveri J.S."/>
            <person name="Zhan M."/>
            <person name="Zhang G."/>
            <person name="Zhao Q."/>
            <person name="Zheng L."/>
            <person name="Zheng X.H."/>
            <person name="Zhong F.N."/>
            <person name="Zhong W."/>
            <person name="Zhou X."/>
            <person name="Zhu S.C."/>
            <person name="Zhu X."/>
            <person name="Smith H.O."/>
            <person name="Gibbs R.A."/>
            <person name="Myers E.W."/>
            <person name="Rubin G.M."/>
            <person name="Venter J.C."/>
        </authorList>
    </citation>
    <scope>NUCLEOTIDE SEQUENCE [LARGE SCALE GENOMIC DNA]</scope>
    <source>
        <strain>Berkeley</strain>
    </source>
</reference>
<reference key="4">
    <citation type="journal article" date="2002" name="Genome Biol.">
        <title>Annotation of the Drosophila melanogaster euchromatic genome: a systematic review.</title>
        <authorList>
            <person name="Misra S."/>
            <person name="Crosby M.A."/>
            <person name="Mungall C.J."/>
            <person name="Matthews B.B."/>
            <person name="Campbell K.S."/>
            <person name="Hradecky P."/>
            <person name="Huang Y."/>
            <person name="Kaminker J.S."/>
            <person name="Millburn G.H."/>
            <person name="Prochnik S.E."/>
            <person name="Smith C.D."/>
            <person name="Tupy J.L."/>
            <person name="Whitfield E.J."/>
            <person name="Bayraktaroglu L."/>
            <person name="Berman B.P."/>
            <person name="Bettencourt B.R."/>
            <person name="Celniker S.E."/>
            <person name="de Grey A.D.N.J."/>
            <person name="Drysdale R.A."/>
            <person name="Harris N.L."/>
            <person name="Richter J."/>
            <person name="Russo S."/>
            <person name="Schroeder A.J."/>
            <person name="Shu S.Q."/>
            <person name="Stapleton M."/>
            <person name="Yamada C."/>
            <person name="Ashburner M."/>
            <person name="Gelbart W.M."/>
            <person name="Rubin G.M."/>
            <person name="Lewis S.E."/>
        </authorList>
    </citation>
    <scope>GENOME REANNOTATION</scope>
    <source>
        <strain>Berkeley</strain>
    </source>
</reference>
<reference key="5">
    <citation type="submission" date="2006-10" db="EMBL/GenBank/DDBJ databases">
        <authorList>
            <person name="Stapleton M."/>
            <person name="Brokstein P."/>
            <person name="Hong L."/>
            <person name="Agbayani A."/>
            <person name="Carlson J.W."/>
            <person name="Champe M."/>
            <person name="Chavez C."/>
            <person name="Dorsett V."/>
            <person name="Dresnek D."/>
            <person name="Farfan D."/>
            <person name="Frise E."/>
            <person name="George R.A."/>
            <person name="Gonzalez M."/>
            <person name="Guarin H."/>
            <person name="Kapadia B."/>
            <person name="Kronmiller B."/>
            <person name="Li P.W."/>
            <person name="Liao G."/>
            <person name="Miranda A."/>
            <person name="Mungall C.J."/>
            <person name="Nunoo J."/>
            <person name="Pacleb J.M."/>
            <person name="Paragas V."/>
            <person name="Park S."/>
            <person name="Patel S."/>
            <person name="Phouanenavong S."/>
            <person name="Wan K.H."/>
            <person name="Yu C."/>
            <person name="Lewis S.E."/>
            <person name="Rubin G.M."/>
            <person name="Celniker S.E."/>
        </authorList>
    </citation>
    <scope>NUCLEOTIDE SEQUENCE [LARGE SCALE MRNA]</scope>
    <source>
        <strain>Berkeley</strain>
        <tissue>Head</tissue>
    </source>
</reference>
<reference key="6">
    <citation type="journal article" date="1994" name="J. Mol. Evol.">
        <title>Phylogeny and physiology of Drosophila opsins.</title>
        <authorList>
            <person name="Carulli J.P."/>
            <person name="Chen D.M."/>
            <person name="Stark W.S."/>
            <person name="Hartl D.L."/>
        </authorList>
    </citation>
    <scope>NUCLEOTIDE SEQUENCE OF 26-346</scope>
</reference>
<reference key="7">
    <citation type="journal article" date="2007" name="Glycobiology">
        <title>Identification of N-glycosylated proteins from the central nervous system of Drosophila melanogaster.</title>
        <authorList>
            <person name="Koles K."/>
            <person name="Lim J.-M."/>
            <person name="Aoki K."/>
            <person name="Porterfield M."/>
            <person name="Tiemeyer M."/>
            <person name="Wells L."/>
            <person name="Panin V."/>
        </authorList>
    </citation>
    <scope>GLYCOSYLATION [LARGE SCALE ANALYSIS] AT ASN-196</scope>
    <scope>IDENTIFICATION BY MASS SPECTROMETRY</scope>
    <source>
        <strain>Oregon-R</strain>
        <tissue>Head</tissue>
    </source>
</reference>
<reference key="8">
    <citation type="journal article" date="2012" name="PLoS Biol.">
        <title>Crag is a GEF for Rab11 required for rhodopsin trafficking and maintenance of adult photoreceptor cells.</title>
        <authorList>
            <person name="Xiong B."/>
            <person name="Bayat V."/>
            <person name="Jaiswal M."/>
            <person name="Zhang K."/>
            <person name="Sandoval H."/>
            <person name="Charng W.L."/>
            <person name="Li T."/>
            <person name="David G."/>
            <person name="Duraine L."/>
            <person name="Lin Y.Q."/>
            <person name="Neely G.G."/>
            <person name="Yamamoto S."/>
            <person name="Bellen H.J."/>
        </authorList>
    </citation>
    <scope>SUBCELLULAR LOCATION</scope>
</reference>
<accession>P06002</accession>
<accession>A0AVV9</accession>
<accession>Q4QPQ2</accession>
<accession>Q9TX56</accession>
<accession>Q9VDS8</accession>
<protein>
    <recommendedName>
        <fullName>Opsin Rh1</fullName>
    </recommendedName>
    <alternativeName>
        <fullName>Neither inactivation nor afterpotential E protein</fullName>
    </alternativeName>
    <alternativeName>
        <fullName>Outer R1-R6 photoreceptor cells opsin</fullName>
    </alternativeName>
</protein>
<gene>
    <name type="primary">ninaE</name>
    <name type="synonym">Rh1</name>
    <name type="ORF">CG4550</name>
</gene>
<organism>
    <name type="scientific">Drosophila melanogaster</name>
    <name type="common">Fruit fly</name>
    <dbReference type="NCBI Taxonomy" id="7227"/>
    <lineage>
        <taxon>Eukaryota</taxon>
        <taxon>Metazoa</taxon>
        <taxon>Ecdysozoa</taxon>
        <taxon>Arthropoda</taxon>
        <taxon>Hexapoda</taxon>
        <taxon>Insecta</taxon>
        <taxon>Pterygota</taxon>
        <taxon>Neoptera</taxon>
        <taxon>Endopterygota</taxon>
        <taxon>Diptera</taxon>
        <taxon>Brachycera</taxon>
        <taxon>Muscomorpha</taxon>
        <taxon>Ephydroidea</taxon>
        <taxon>Drosophilidae</taxon>
        <taxon>Drosophila</taxon>
        <taxon>Sophophora</taxon>
    </lineage>
</organism>
<name>OPS1_DROME</name>
<evidence type="ECO:0000255" key="1"/>
<evidence type="ECO:0000255" key="2">
    <source>
        <dbReference type="PROSITE-ProRule" id="PRU00521"/>
    </source>
</evidence>
<evidence type="ECO:0000256" key="3">
    <source>
        <dbReference type="SAM" id="MobiDB-lite"/>
    </source>
</evidence>
<evidence type="ECO:0000269" key="4">
    <source>
    </source>
</evidence>
<evidence type="ECO:0000269" key="5">
    <source>
    </source>
</evidence>
<evidence type="ECO:0000305" key="6"/>
<comment type="function">
    <text>Visual pigments are the light-absorbing molecules that mediate vision. They consist of an apoprotein, opsin, covalently linked to cis-retinal.</text>
</comment>
<comment type="biophysicochemical properties">
    <absorption>
        <max>480 nm</max>
    </absorption>
</comment>
<comment type="subcellular location">
    <subcellularLocation>
        <location evidence="5">Cell projection</location>
        <location evidence="5">Rhabdomere membrane</location>
        <topology evidence="6">Multi-pass membrane protein</topology>
    </subcellularLocation>
    <text evidence="5">Upon white light stimulation, is internalized into the rhabdomere membranes.</text>
</comment>
<comment type="PTM">
    <text>Phosphorylated on some or all of the serine and threonine residues present in the C-terminal region.</text>
</comment>
<comment type="miscellaneous">
    <text>Each Drosophila eye is composed of 800 facets or ommatidia. Each ommatidium contains 8 photoreceptor cells (R1-R8), the R1 to R6 cells are outer cells, while R7 and R8 are inner cells.</text>
</comment>
<comment type="similarity">
    <text evidence="2">Belongs to the G-protein coupled receptor 1 family. Opsin subfamily.</text>
</comment>
<feature type="chain" id="PRO_0000197622" description="Opsin Rh1">
    <location>
        <begin position="1"/>
        <end position="373"/>
    </location>
</feature>
<feature type="topological domain" description="Extracellular">
    <location>
        <begin position="1"/>
        <end position="49"/>
    </location>
</feature>
<feature type="transmembrane region" description="Helical; Name=1" evidence="1">
    <location>
        <begin position="50"/>
        <end position="74"/>
    </location>
</feature>
<feature type="topological domain" description="Cytoplasmic">
    <location>
        <begin position="75"/>
        <end position="86"/>
    </location>
</feature>
<feature type="transmembrane region" description="Helical; Name=2" evidence="1">
    <location>
        <begin position="87"/>
        <end position="112"/>
    </location>
</feature>
<feature type="topological domain" description="Extracellular">
    <location>
        <begin position="113"/>
        <end position="126"/>
    </location>
</feature>
<feature type="transmembrane region" description="Helical; Name=3" evidence="1">
    <location>
        <begin position="127"/>
        <end position="146"/>
    </location>
</feature>
<feature type="topological domain" description="Cytoplasmic">
    <location>
        <begin position="147"/>
        <end position="165"/>
    </location>
</feature>
<feature type="transmembrane region" description="Helical; Name=4" evidence="1">
    <location>
        <begin position="166"/>
        <end position="189"/>
    </location>
</feature>
<feature type="topological domain" description="Extracellular">
    <location>
        <begin position="190"/>
        <end position="213"/>
    </location>
</feature>
<feature type="transmembrane region" description="Helical; Name=5" evidence="1">
    <location>
        <begin position="214"/>
        <end position="241"/>
    </location>
</feature>
<feature type="topological domain" description="Cytoplasmic">
    <location>
        <begin position="242"/>
        <end position="276"/>
    </location>
</feature>
<feature type="transmembrane region" description="Helical; Name=6" evidence="1">
    <location>
        <begin position="277"/>
        <end position="300"/>
    </location>
</feature>
<feature type="topological domain" description="Extracellular">
    <location>
        <begin position="301"/>
        <end position="307"/>
    </location>
</feature>
<feature type="transmembrane region" description="Helical; Name=7" evidence="1">
    <location>
        <begin position="308"/>
        <end position="332"/>
    </location>
</feature>
<feature type="topological domain" description="Cytoplasmic">
    <location>
        <begin position="333"/>
        <end position="373"/>
    </location>
</feature>
<feature type="region of interest" description="Disordered" evidence="3">
    <location>
        <begin position="354"/>
        <end position="373"/>
    </location>
</feature>
<feature type="compositionally biased region" description="Low complexity" evidence="3">
    <location>
        <begin position="358"/>
        <end position="373"/>
    </location>
</feature>
<feature type="modified residue" description="N6-(retinylidene)lysine">
    <location>
        <position position="319"/>
    </location>
</feature>
<feature type="glycosylation site" description="N-linked (GlcNAc...) asparagine" evidence="6">
    <location>
        <position position="20"/>
    </location>
</feature>
<feature type="glycosylation site" description="N-linked (GlcNAc...) asparagine" evidence="4">
    <location>
        <position position="196"/>
    </location>
</feature>
<feature type="disulfide bond" evidence="2">
    <location>
        <begin position="123"/>
        <end position="200"/>
    </location>
</feature>